<reference key="1">
    <citation type="journal article" date="2005" name="Atherosclerosis">
        <title>Atherin: a newly identified, lesion-specific, LDL-binding protein in human atherosclerosis.</title>
        <authorList>
            <person name="Lees A.M."/>
            <person name="Deconinck A.E."/>
            <person name="Campbell B.D."/>
            <person name="Lees R.S."/>
        </authorList>
    </citation>
    <scope>NUCLEOTIDE SEQUENCE [MRNA]</scope>
    <source>
        <tissue>Aorta</tissue>
    </source>
</reference>
<feature type="chain" id="PRO_0000279495" description="Atherin">
    <location>
        <begin position="1"/>
        <end position="550"/>
    </location>
</feature>
<feature type="domain" description="SAMD1-like winged helix (WH)" evidence="3">
    <location>
        <begin position="24"/>
        <end position="100"/>
    </location>
</feature>
<feature type="domain" description="SAM" evidence="2">
    <location>
        <begin position="474"/>
        <end position="542"/>
    </location>
</feature>
<feature type="region of interest" description="Disordered" evidence="4">
    <location>
        <begin position="1"/>
        <end position="32"/>
    </location>
</feature>
<feature type="region of interest" description="Disordered" evidence="4">
    <location>
        <begin position="93"/>
        <end position="468"/>
    </location>
</feature>
<feature type="compositionally biased region" description="Pro residues" evidence="4">
    <location>
        <begin position="1"/>
        <end position="11"/>
    </location>
</feature>
<feature type="compositionally biased region" description="Low complexity" evidence="4">
    <location>
        <begin position="12"/>
        <end position="30"/>
    </location>
</feature>
<feature type="compositionally biased region" description="Pro residues" evidence="4">
    <location>
        <begin position="125"/>
        <end position="138"/>
    </location>
</feature>
<feature type="compositionally biased region" description="Low complexity" evidence="4">
    <location>
        <begin position="139"/>
        <end position="160"/>
    </location>
</feature>
<feature type="compositionally biased region" description="Low complexity" evidence="4">
    <location>
        <begin position="170"/>
        <end position="179"/>
    </location>
</feature>
<feature type="compositionally biased region" description="Pro residues" evidence="4">
    <location>
        <begin position="180"/>
        <end position="205"/>
    </location>
</feature>
<feature type="compositionally biased region" description="Pro residues" evidence="4">
    <location>
        <begin position="214"/>
        <end position="245"/>
    </location>
</feature>
<feature type="compositionally biased region" description="Low complexity" evidence="4">
    <location>
        <begin position="246"/>
        <end position="257"/>
    </location>
</feature>
<feature type="compositionally biased region" description="Basic and acidic residues" evidence="4">
    <location>
        <begin position="290"/>
        <end position="300"/>
    </location>
</feature>
<feature type="compositionally biased region" description="Acidic residues" evidence="4">
    <location>
        <begin position="337"/>
        <end position="355"/>
    </location>
</feature>
<feature type="compositionally biased region" description="Pro residues" evidence="4">
    <location>
        <begin position="437"/>
        <end position="448"/>
    </location>
</feature>
<feature type="modified residue" description="Phosphothreonine" evidence="1">
    <location>
        <position position="108"/>
    </location>
</feature>
<feature type="modified residue" description="Phosphoserine" evidence="1">
    <location>
        <position position="163"/>
    </location>
</feature>
<feature type="modified residue" description="Phosphoserine" evidence="1">
    <location>
        <position position="270"/>
    </location>
</feature>
<organism>
    <name type="scientific">Oryctolagus cuniculus</name>
    <name type="common">Rabbit</name>
    <dbReference type="NCBI Taxonomy" id="9986"/>
    <lineage>
        <taxon>Eukaryota</taxon>
        <taxon>Metazoa</taxon>
        <taxon>Chordata</taxon>
        <taxon>Craniata</taxon>
        <taxon>Vertebrata</taxon>
        <taxon>Euteleostomi</taxon>
        <taxon>Mammalia</taxon>
        <taxon>Eutheria</taxon>
        <taxon>Euarchontoglires</taxon>
        <taxon>Glires</taxon>
        <taxon>Lagomorpha</taxon>
        <taxon>Leporidae</taxon>
        <taxon>Oryctolagus</taxon>
    </lineage>
</organism>
<sequence>MAGPPALPPPETAAAATTAAAAASSSAASPHYQEWILDTIDSLRSRKARPDLERICRMVRRRHGPEPERTRAELEKLIQQRAVLRVSYKGSISYRNAARVQPPRRGATPPAPPRAPRGGPAAAAAPPPTPAPPPPPAPVAAAAAPARAPRAAAAAAAATAPPSPGPAQPGPRAQRAAPLAAPPPAPAAPPAAAPPAGPRRAPPPAAAVAARESPLPPPPQPPAPPQQQQQPPPPPPPQQPQPPPEGGAARAGGPARPVSLREVVRYLGGSSGAGGRLTRGRVQGLLEEEAAARGRLERTRLGALALPRGDRPGRAPPAASARAARNKRAGEERVLEKEEEEEEEEDDEDDDDDVVSEGSEVPESDRPAGAQHHQLNGGERGPQTAKERAKEWSLCGPHPGQEEGRGPAAGSGTRQVFSMAALSKEGGSASSTTGPDSPSPVPLPPGKPALPGADGTPFGCPAGRKEKPADPVEWTVMDVVEYFTEAGFPEQATAFQEQEIDGKSLLLMQRTDVLTGLSIRLGPALKIYEHHIKVLQQGHFEDDDPEGFLG</sequence>
<name>SAMD1_RABIT</name>
<proteinExistence type="evidence at transcript level"/>
<evidence type="ECO:0000250" key="1">
    <source>
        <dbReference type="UniProtKB" id="Q6SPF0"/>
    </source>
</evidence>
<evidence type="ECO:0000255" key="2">
    <source>
        <dbReference type="PROSITE-ProRule" id="PRU00184"/>
    </source>
</evidence>
<evidence type="ECO:0000255" key="3">
    <source>
        <dbReference type="PROSITE-ProRule" id="PRU01358"/>
    </source>
</evidence>
<evidence type="ECO:0000256" key="4">
    <source>
        <dbReference type="SAM" id="MobiDB-lite"/>
    </source>
</evidence>
<gene>
    <name type="primary">SAMD1</name>
</gene>
<keyword id="KW-0156">Chromatin regulator</keyword>
<keyword id="KW-0158">Chromosome</keyword>
<keyword id="KW-0539">Nucleus</keyword>
<keyword id="KW-0597">Phosphoprotein</keyword>
<keyword id="KW-1185">Reference proteome</keyword>
<keyword id="KW-0964">Secreted</keyword>
<comment type="function">
    <text evidence="1">Unmethylated CpG islands (CGIs)-binding protein which localizes to H3K4me3-decorated CGIs, where it acts as a transcriptional repressor. Tethers L3MBTL3 to chromatin and interacts with the KDM1A histone demethylase complex to modulate H3K4me2 and H3K4me3 levels at CGIs. Plays a role in atherogenesis by binding with LDL on cell surface and promoting LDL oxidation which leads to the formation of foam cell.</text>
</comment>
<comment type="subunit">
    <text evidence="1">Homopolymerize into a closed pentameric ring. Interacts (via SAM domain) with L3MBTL3 (via SAM domain); the interaction mediates L3MBTL3 binding to chromatin. Interacts (via WH domain) with KDM1A; the interaction modulates KDM1A function.</text>
</comment>
<comment type="subcellular location">
    <subcellularLocation>
        <location evidence="1">Nucleus</location>
    </subcellularLocation>
    <subcellularLocation>
        <location evidence="1">Chromosome</location>
    </subcellularLocation>
    <subcellularLocation>
        <location evidence="1">Secreted</location>
    </subcellularLocation>
    <text evidence="1">In atherosclerotic lesions, it is found in the extracellular compartment and in foam cells cytoplasm.</text>
</comment>
<comment type="domain">
    <text evidence="1">Winged-helix (WH) domain directly recognizes and binds unmethylated CpG-containing DNA via simultaneous interactions with both the major and the minor groove of DNA.</text>
</comment>
<dbReference type="EMBL" id="AY453841">
    <property type="protein sequence ID" value="AAR24088.1"/>
    <property type="molecule type" value="mRNA"/>
</dbReference>
<dbReference type="RefSeq" id="NP_001075633.1">
    <property type="nucleotide sequence ID" value="NM_001082164.1"/>
</dbReference>
<dbReference type="RefSeq" id="XP_069914497.1">
    <property type="nucleotide sequence ID" value="XM_070058396.1"/>
</dbReference>
<dbReference type="SMR" id="Q6SPE9"/>
<dbReference type="FunCoup" id="Q6SPE9">
    <property type="interactions" value="13"/>
</dbReference>
<dbReference type="GeneID" id="100008923"/>
<dbReference type="KEGG" id="ocu:100008923"/>
<dbReference type="CTD" id="90378"/>
<dbReference type="InParanoid" id="Q6SPE9"/>
<dbReference type="OrthoDB" id="10004495at2759"/>
<dbReference type="Proteomes" id="UP000001811">
    <property type="component" value="Unplaced"/>
</dbReference>
<dbReference type="GO" id="GO:0005694">
    <property type="term" value="C:chromosome"/>
    <property type="evidence" value="ECO:0007669"/>
    <property type="project" value="UniProtKB-SubCell"/>
</dbReference>
<dbReference type="GO" id="GO:0005615">
    <property type="term" value="C:extracellular space"/>
    <property type="evidence" value="ECO:0000250"/>
    <property type="project" value="UniProtKB"/>
</dbReference>
<dbReference type="GO" id="GO:0005634">
    <property type="term" value="C:nucleus"/>
    <property type="evidence" value="ECO:0000250"/>
    <property type="project" value="UniProtKB"/>
</dbReference>
<dbReference type="GO" id="GO:0003682">
    <property type="term" value="F:chromatin binding"/>
    <property type="evidence" value="ECO:0000250"/>
    <property type="project" value="UniProtKB"/>
</dbReference>
<dbReference type="GO" id="GO:0003677">
    <property type="term" value="F:DNA binding"/>
    <property type="evidence" value="ECO:0007669"/>
    <property type="project" value="InterPro"/>
</dbReference>
<dbReference type="GO" id="GO:0030169">
    <property type="term" value="F:low-density lipoprotein particle binding"/>
    <property type="evidence" value="ECO:0000250"/>
    <property type="project" value="UniProtKB"/>
</dbReference>
<dbReference type="GO" id="GO:0006325">
    <property type="term" value="P:chromatin organization"/>
    <property type="evidence" value="ECO:0007669"/>
    <property type="project" value="UniProtKB-KW"/>
</dbReference>
<dbReference type="GO" id="GO:0090077">
    <property type="term" value="P:foam cell differentiation"/>
    <property type="evidence" value="ECO:0000250"/>
    <property type="project" value="UniProtKB"/>
</dbReference>
<dbReference type="GO" id="GO:0034439">
    <property type="term" value="P:lipoprotein lipid oxidation"/>
    <property type="evidence" value="ECO:0000250"/>
    <property type="project" value="UniProtKB"/>
</dbReference>
<dbReference type="GO" id="GO:0000122">
    <property type="term" value="P:negative regulation of transcription by RNA polymerase II"/>
    <property type="evidence" value="ECO:0000250"/>
    <property type="project" value="UniProtKB"/>
</dbReference>
<dbReference type="GO" id="GO:0160217">
    <property type="term" value="P:negative regulation of transcription initiation-coupled chromatin remodeling"/>
    <property type="evidence" value="ECO:0000250"/>
    <property type="project" value="UniProtKB"/>
</dbReference>
<dbReference type="GO" id="GO:0051260">
    <property type="term" value="P:protein homooligomerization"/>
    <property type="evidence" value="ECO:0000250"/>
    <property type="project" value="UniProtKB"/>
</dbReference>
<dbReference type="CDD" id="cd09583">
    <property type="entry name" value="SAM_Atherin-like"/>
    <property type="match status" value="1"/>
</dbReference>
<dbReference type="Gene3D" id="1.10.150.50">
    <property type="entry name" value="Transcription Factor, Ets-1"/>
    <property type="match status" value="1"/>
</dbReference>
<dbReference type="InterPro" id="IPR001660">
    <property type="entry name" value="SAM"/>
</dbReference>
<dbReference type="InterPro" id="IPR013761">
    <property type="entry name" value="SAM/pointed_sf"/>
</dbReference>
<dbReference type="InterPro" id="IPR056983">
    <property type="entry name" value="SAMD1-like_SHD"/>
</dbReference>
<dbReference type="InterPro" id="IPR048589">
    <property type="entry name" value="SAMD1-like_WH"/>
</dbReference>
<dbReference type="PANTHER" id="PTHR36292:SF2">
    <property type="entry name" value="STERILE ALPHA MOTIF DOMAIN-CONTAINING PROTEIN 1"/>
    <property type="match status" value="1"/>
</dbReference>
<dbReference type="PANTHER" id="PTHR36292">
    <property type="entry name" value="UPF0575 PROTEIN C19ORF67"/>
    <property type="match status" value="1"/>
</dbReference>
<dbReference type="Pfam" id="PF00536">
    <property type="entry name" value="SAM_1"/>
    <property type="match status" value="1"/>
</dbReference>
<dbReference type="Pfam" id="PF24971">
    <property type="entry name" value="SAMD1_SHD"/>
    <property type="match status" value="1"/>
</dbReference>
<dbReference type="Pfam" id="PF21524">
    <property type="entry name" value="SAMD1_WH"/>
    <property type="match status" value="1"/>
</dbReference>
<dbReference type="SMART" id="SM00454">
    <property type="entry name" value="SAM"/>
    <property type="match status" value="1"/>
</dbReference>
<dbReference type="SUPFAM" id="SSF47769">
    <property type="entry name" value="SAM/Pointed domain"/>
    <property type="match status" value="1"/>
</dbReference>
<dbReference type="PROSITE" id="PS50105">
    <property type="entry name" value="SAM_DOMAIN"/>
    <property type="match status" value="1"/>
</dbReference>
<dbReference type="PROSITE" id="PS52014">
    <property type="entry name" value="SAMD1_WH"/>
    <property type="match status" value="1"/>
</dbReference>
<protein>
    <recommendedName>
        <fullName>Atherin</fullName>
    </recommendedName>
    <alternativeName>
        <fullName>Sterile alpha motif domain-containing protein 1</fullName>
        <shortName>SAM domain-containing protein 1</shortName>
    </alternativeName>
</protein>
<accession>Q6SPE9</accession>